<accession>A0LVS1</accession>
<comment type="function">
    <text evidence="1">Part of the Sec protein translocase complex. Interacts with the SecYEG preprotein conducting channel. Has a central role in coupling the hydrolysis of ATP to the transfer of proteins into and across the cell membrane, serving as an ATP-driven molecular motor driving the stepwise translocation of polypeptide chains across the membrane.</text>
</comment>
<comment type="catalytic activity">
    <reaction evidence="1">
        <text>ATP + H2O + cellular proteinSide 1 = ADP + phosphate + cellular proteinSide 2.</text>
        <dbReference type="EC" id="7.4.2.8"/>
    </reaction>
</comment>
<comment type="cofactor">
    <cofactor evidence="1">
        <name>Zn(2+)</name>
        <dbReference type="ChEBI" id="CHEBI:29105"/>
    </cofactor>
    <text evidence="1">May bind 1 zinc ion per subunit.</text>
</comment>
<comment type="subunit">
    <text evidence="1">Monomer and homodimer. Part of the essential Sec protein translocation apparatus which comprises SecA, SecYEG and auxiliary proteins SecDF. Other proteins may also be involved.</text>
</comment>
<comment type="subcellular location">
    <subcellularLocation>
        <location evidence="1">Cell membrane</location>
        <topology evidence="1">Peripheral membrane protein</topology>
        <orientation evidence="1">Cytoplasmic side</orientation>
    </subcellularLocation>
    <subcellularLocation>
        <location evidence="1">Cytoplasm</location>
    </subcellularLocation>
    <text evidence="1">Distribution is 50-50.</text>
</comment>
<comment type="similarity">
    <text evidence="1">Belongs to the SecA family.</text>
</comment>
<gene>
    <name evidence="1" type="primary">secA</name>
    <name type="ordered locus">Acel_1759</name>
</gene>
<keyword id="KW-0067">ATP-binding</keyword>
<keyword id="KW-1003">Cell membrane</keyword>
<keyword id="KW-0963">Cytoplasm</keyword>
<keyword id="KW-0472">Membrane</keyword>
<keyword id="KW-0479">Metal-binding</keyword>
<keyword id="KW-0547">Nucleotide-binding</keyword>
<keyword id="KW-0653">Protein transport</keyword>
<keyword id="KW-1185">Reference proteome</keyword>
<keyword id="KW-1278">Translocase</keyword>
<keyword id="KW-0811">Translocation</keyword>
<keyword id="KW-0813">Transport</keyword>
<keyword id="KW-0862">Zinc</keyword>
<feature type="chain" id="PRO_0000318303" description="Protein translocase subunit SecA">
    <location>
        <begin position="1"/>
        <end position="1009"/>
    </location>
</feature>
<feature type="region of interest" description="Disordered" evidence="2">
    <location>
        <begin position="869"/>
        <end position="894"/>
    </location>
</feature>
<feature type="region of interest" description="Disordered" evidence="2">
    <location>
        <begin position="949"/>
        <end position="1009"/>
    </location>
</feature>
<feature type="compositionally biased region" description="Low complexity" evidence="2">
    <location>
        <begin position="883"/>
        <end position="894"/>
    </location>
</feature>
<feature type="compositionally biased region" description="Low complexity" evidence="2">
    <location>
        <begin position="953"/>
        <end position="973"/>
    </location>
</feature>
<feature type="binding site" evidence="1">
    <location>
        <position position="86"/>
    </location>
    <ligand>
        <name>ATP</name>
        <dbReference type="ChEBI" id="CHEBI:30616"/>
    </ligand>
</feature>
<feature type="binding site" evidence="1">
    <location>
        <begin position="104"/>
        <end position="108"/>
    </location>
    <ligand>
        <name>ATP</name>
        <dbReference type="ChEBI" id="CHEBI:30616"/>
    </ligand>
</feature>
<feature type="binding site" evidence="1">
    <location>
        <position position="497"/>
    </location>
    <ligand>
        <name>ATP</name>
        <dbReference type="ChEBI" id="CHEBI:30616"/>
    </ligand>
</feature>
<feature type="binding site" evidence="1">
    <location>
        <position position="990"/>
    </location>
    <ligand>
        <name>Zn(2+)</name>
        <dbReference type="ChEBI" id="CHEBI:29105"/>
    </ligand>
</feature>
<feature type="binding site" evidence="1">
    <location>
        <position position="992"/>
    </location>
    <ligand>
        <name>Zn(2+)</name>
        <dbReference type="ChEBI" id="CHEBI:29105"/>
    </ligand>
</feature>
<feature type="binding site" evidence="1">
    <location>
        <position position="1001"/>
    </location>
    <ligand>
        <name>Zn(2+)</name>
        <dbReference type="ChEBI" id="CHEBI:29105"/>
    </ligand>
</feature>
<feature type="binding site" evidence="1">
    <location>
        <position position="1002"/>
    </location>
    <ligand>
        <name>Zn(2+)</name>
        <dbReference type="ChEBI" id="CHEBI:29105"/>
    </ligand>
</feature>
<evidence type="ECO:0000255" key="1">
    <source>
        <dbReference type="HAMAP-Rule" id="MF_01382"/>
    </source>
</evidence>
<evidence type="ECO:0000256" key="2">
    <source>
        <dbReference type="SAM" id="MobiDB-lite"/>
    </source>
</evidence>
<proteinExistence type="inferred from homology"/>
<dbReference type="EC" id="7.4.2.8" evidence="1"/>
<dbReference type="EMBL" id="CP000481">
    <property type="protein sequence ID" value="ABK53531.1"/>
    <property type="molecule type" value="Genomic_DNA"/>
</dbReference>
<dbReference type="RefSeq" id="WP_011720594.1">
    <property type="nucleotide sequence ID" value="NC_008578.1"/>
</dbReference>
<dbReference type="SMR" id="A0LVS1"/>
<dbReference type="FunCoup" id="A0LVS1">
    <property type="interactions" value="253"/>
</dbReference>
<dbReference type="STRING" id="351607.Acel_1759"/>
<dbReference type="KEGG" id="ace:Acel_1759"/>
<dbReference type="eggNOG" id="COG0653">
    <property type="taxonomic scope" value="Bacteria"/>
</dbReference>
<dbReference type="HOGENOM" id="CLU_005314_3_0_11"/>
<dbReference type="InParanoid" id="A0LVS1"/>
<dbReference type="OrthoDB" id="9805579at2"/>
<dbReference type="Proteomes" id="UP000008221">
    <property type="component" value="Chromosome"/>
</dbReference>
<dbReference type="GO" id="GO:0031522">
    <property type="term" value="C:cell envelope Sec protein transport complex"/>
    <property type="evidence" value="ECO:0007669"/>
    <property type="project" value="TreeGrafter"/>
</dbReference>
<dbReference type="GO" id="GO:0005829">
    <property type="term" value="C:cytosol"/>
    <property type="evidence" value="ECO:0007669"/>
    <property type="project" value="TreeGrafter"/>
</dbReference>
<dbReference type="GO" id="GO:0005886">
    <property type="term" value="C:plasma membrane"/>
    <property type="evidence" value="ECO:0007669"/>
    <property type="project" value="UniProtKB-SubCell"/>
</dbReference>
<dbReference type="GO" id="GO:0005524">
    <property type="term" value="F:ATP binding"/>
    <property type="evidence" value="ECO:0007669"/>
    <property type="project" value="UniProtKB-UniRule"/>
</dbReference>
<dbReference type="GO" id="GO:0046872">
    <property type="term" value="F:metal ion binding"/>
    <property type="evidence" value="ECO:0007669"/>
    <property type="project" value="UniProtKB-KW"/>
</dbReference>
<dbReference type="GO" id="GO:0008564">
    <property type="term" value="F:protein-exporting ATPase activity"/>
    <property type="evidence" value="ECO:0007669"/>
    <property type="project" value="UniProtKB-EC"/>
</dbReference>
<dbReference type="GO" id="GO:0065002">
    <property type="term" value="P:intracellular protein transmembrane transport"/>
    <property type="evidence" value="ECO:0007669"/>
    <property type="project" value="UniProtKB-UniRule"/>
</dbReference>
<dbReference type="GO" id="GO:0017038">
    <property type="term" value="P:protein import"/>
    <property type="evidence" value="ECO:0007669"/>
    <property type="project" value="InterPro"/>
</dbReference>
<dbReference type="GO" id="GO:0006605">
    <property type="term" value="P:protein targeting"/>
    <property type="evidence" value="ECO:0007669"/>
    <property type="project" value="UniProtKB-UniRule"/>
</dbReference>
<dbReference type="GO" id="GO:0043952">
    <property type="term" value="P:protein transport by the Sec complex"/>
    <property type="evidence" value="ECO:0007669"/>
    <property type="project" value="TreeGrafter"/>
</dbReference>
<dbReference type="CDD" id="cd17928">
    <property type="entry name" value="DEXDc_SecA"/>
    <property type="match status" value="1"/>
</dbReference>
<dbReference type="CDD" id="cd18803">
    <property type="entry name" value="SF2_C_secA"/>
    <property type="match status" value="1"/>
</dbReference>
<dbReference type="FunFam" id="1.10.3060.10:FF:000002">
    <property type="entry name" value="Preprotein translocase subunit SecA"/>
    <property type="match status" value="1"/>
</dbReference>
<dbReference type="FunFam" id="3.40.50.300:FF:000113">
    <property type="entry name" value="Preprotein translocase subunit SecA"/>
    <property type="match status" value="1"/>
</dbReference>
<dbReference type="FunFam" id="3.40.50.300:FF:000334">
    <property type="entry name" value="Protein translocase subunit SecA"/>
    <property type="match status" value="1"/>
</dbReference>
<dbReference type="FunFam" id="3.90.1440.10:FF:000002">
    <property type="entry name" value="Protein translocase subunit SecA"/>
    <property type="match status" value="1"/>
</dbReference>
<dbReference type="Gene3D" id="1.10.3060.10">
    <property type="entry name" value="Helical scaffold and wing domains of SecA"/>
    <property type="match status" value="1"/>
</dbReference>
<dbReference type="Gene3D" id="3.40.50.300">
    <property type="entry name" value="P-loop containing nucleotide triphosphate hydrolases"/>
    <property type="match status" value="2"/>
</dbReference>
<dbReference type="Gene3D" id="3.90.1440.10">
    <property type="entry name" value="SecA, preprotein cross-linking domain"/>
    <property type="match status" value="1"/>
</dbReference>
<dbReference type="HAMAP" id="MF_01382">
    <property type="entry name" value="SecA"/>
    <property type="match status" value="1"/>
</dbReference>
<dbReference type="InterPro" id="IPR014001">
    <property type="entry name" value="Helicase_ATP-bd"/>
</dbReference>
<dbReference type="InterPro" id="IPR001650">
    <property type="entry name" value="Helicase_C-like"/>
</dbReference>
<dbReference type="InterPro" id="IPR027417">
    <property type="entry name" value="P-loop_NTPase"/>
</dbReference>
<dbReference type="InterPro" id="IPR004027">
    <property type="entry name" value="SEC_C_motif"/>
</dbReference>
<dbReference type="InterPro" id="IPR000185">
    <property type="entry name" value="SecA"/>
</dbReference>
<dbReference type="InterPro" id="IPR020937">
    <property type="entry name" value="SecA_CS"/>
</dbReference>
<dbReference type="InterPro" id="IPR011115">
    <property type="entry name" value="SecA_DEAD"/>
</dbReference>
<dbReference type="InterPro" id="IPR014018">
    <property type="entry name" value="SecA_motor_DEAD"/>
</dbReference>
<dbReference type="InterPro" id="IPR011130">
    <property type="entry name" value="SecA_preprotein_X-link_dom"/>
</dbReference>
<dbReference type="InterPro" id="IPR044722">
    <property type="entry name" value="SecA_SF2_C"/>
</dbReference>
<dbReference type="InterPro" id="IPR011116">
    <property type="entry name" value="SecA_Wing/Scaffold"/>
</dbReference>
<dbReference type="InterPro" id="IPR036266">
    <property type="entry name" value="SecA_Wing/Scaffold_sf"/>
</dbReference>
<dbReference type="InterPro" id="IPR036670">
    <property type="entry name" value="SecA_X-link_sf"/>
</dbReference>
<dbReference type="NCBIfam" id="NF009538">
    <property type="entry name" value="PRK12904.1"/>
    <property type="match status" value="1"/>
</dbReference>
<dbReference type="NCBIfam" id="TIGR00963">
    <property type="entry name" value="secA"/>
    <property type="match status" value="1"/>
</dbReference>
<dbReference type="PANTHER" id="PTHR30612:SF0">
    <property type="entry name" value="CHLOROPLAST PROTEIN-TRANSPORTING ATPASE"/>
    <property type="match status" value="1"/>
</dbReference>
<dbReference type="PANTHER" id="PTHR30612">
    <property type="entry name" value="SECA INNER MEMBRANE COMPONENT OF SEC PROTEIN SECRETION SYSTEM"/>
    <property type="match status" value="1"/>
</dbReference>
<dbReference type="Pfam" id="PF21090">
    <property type="entry name" value="P-loop_SecA"/>
    <property type="match status" value="1"/>
</dbReference>
<dbReference type="Pfam" id="PF02810">
    <property type="entry name" value="SEC-C"/>
    <property type="match status" value="1"/>
</dbReference>
<dbReference type="Pfam" id="PF07517">
    <property type="entry name" value="SecA_DEAD"/>
    <property type="match status" value="1"/>
</dbReference>
<dbReference type="Pfam" id="PF01043">
    <property type="entry name" value="SecA_PP_bind"/>
    <property type="match status" value="1"/>
</dbReference>
<dbReference type="Pfam" id="PF07516">
    <property type="entry name" value="SecA_SW"/>
    <property type="match status" value="1"/>
</dbReference>
<dbReference type="PRINTS" id="PR00906">
    <property type="entry name" value="SECA"/>
</dbReference>
<dbReference type="SMART" id="SM00957">
    <property type="entry name" value="SecA_DEAD"/>
    <property type="match status" value="1"/>
</dbReference>
<dbReference type="SMART" id="SM00958">
    <property type="entry name" value="SecA_PP_bind"/>
    <property type="match status" value="1"/>
</dbReference>
<dbReference type="SUPFAM" id="SSF81886">
    <property type="entry name" value="Helical scaffold and wing domains of SecA"/>
    <property type="match status" value="1"/>
</dbReference>
<dbReference type="SUPFAM" id="SSF52540">
    <property type="entry name" value="P-loop containing nucleoside triphosphate hydrolases"/>
    <property type="match status" value="2"/>
</dbReference>
<dbReference type="SUPFAM" id="SSF81767">
    <property type="entry name" value="Pre-protein crosslinking domain of SecA"/>
    <property type="match status" value="1"/>
</dbReference>
<dbReference type="SUPFAM" id="SSF103642">
    <property type="entry name" value="Sec-C motif"/>
    <property type="match status" value="1"/>
</dbReference>
<dbReference type="PROSITE" id="PS01312">
    <property type="entry name" value="SECA"/>
    <property type="match status" value="1"/>
</dbReference>
<dbReference type="PROSITE" id="PS51196">
    <property type="entry name" value="SECA_MOTOR_DEAD"/>
    <property type="match status" value="1"/>
</dbReference>
<organism>
    <name type="scientific">Acidothermus cellulolyticus (strain ATCC 43068 / DSM 8971 / 11B)</name>
    <dbReference type="NCBI Taxonomy" id="351607"/>
    <lineage>
        <taxon>Bacteria</taxon>
        <taxon>Bacillati</taxon>
        <taxon>Actinomycetota</taxon>
        <taxon>Actinomycetes</taxon>
        <taxon>Acidothermales</taxon>
        <taxon>Acidothermaceae</taxon>
        <taxon>Acidothermus</taxon>
    </lineage>
</organism>
<sequence>MPALLDKLLRAGEGKILRKLKAIAEQVNSIEDEFAKLSDGELRGLTDEFRARYADGESLDDLLPEAFAAVREAAKRTLGQRHFDVQIMGGAALHFGNIAEMKTGEGKTLVSTLPAYLNALAGRGVHVVTVNDYLARRDAEWMGRIHRFLGLEVGVISPQMGPAERKKAYAADITYGTNNEFGFDYLRDNMAWSVDEIVQRGHFYAIVDEVDSILIDEARTPLIISGPVDMNQKWYTDFAKLAERLQRGENGEGDYEVDEKKRTISITERGVQRVEDWLGIDNLYEPTNTPLVGYLHNALRAKELYKRDRDYVVIDGEVLIVDEFTGRILYGRRYNEGMHQAIEAKEGVPIKQENQTLATITLQNYFRLYEKLAGMTGTAMTEANEFHQIYKLGVVPIPTNRPMIRIDQPDVVFKTEKAKFAAVVEDIAQRHAKGQPVLVGTTSVEKSELLSGMLLRRGIPHAVLNAKYHEKEAAIVAQAGRKGAVTVATNMAGRGTDIMLGGNPEFLARQELAERGLSPVDTPEEYEAAWPEVLEKWKKAVAAEHDEVVQLGGLYVLGTERHDSRRIDNQLRGRSGRQGDPGESRFYLSLEDDLMRLFNGPMVQRIMETLNYPEDVPLESKMVTRAIRSAQTQVEQQNFEIRKNVLKYDEVLNKQRAVIYAERRRVLHGDDLHEQVGHMIDDVIRDYVRAATEEGYAEDWDLEQLWTALRSLYPVGLTIDQVVAECGGDRSGLTAEFLIERLTEDAHRAYAEREAALGTLPDGQPVIRELERRVVLAVLDRKWREHLYEMDYLQEGIQLRSYGQRDPLVEYQREGYTMFQTMLDGIKEESVRLLFSVDVQVTPVAEAPVAATAAADGAGTAAEGTAGVAVPQPAGASGPALQPVPAATAPGQQPVPAAAALSPGAGMRLADSPVAKLLAPPRPTRLQYTAPTIDGAAGSGEATAMTVDERRPSGAAARGPSPASASRQRAGAGEQARPLMYAGTPRSAKCPCGSGKPYKRCHGDPRNAG</sequence>
<name>SECA_ACIC1</name>
<protein>
    <recommendedName>
        <fullName evidence="1">Protein translocase subunit SecA</fullName>
        <ecNumber evidence="1">7.4.2.8</ecNumber>
    </recommendedName>
</protein>
<reference key="1">
    <citation type="journal article" date="2009" name="Genome Res.">
        <title>Complete genome of the cellulolytic thermophile Acidothermus cellulolyticus 11B provides insights into its ecophysiological and evolutionary adaptations.</title>
        <authorList>
            <person name="Barabote R.D."/>
            <person name="Xie G."/>
            <person name="Leu D.H."/>
            <person name="Normand P."/>
            <person name="Necsulea A."/>
            <person name="Daubin V."/>
            <person name="Medigue C."/>
            <person name="Adney W.S."/>
            <person name="Xu X.C."/>
            <person name="Lapidus A."/>
            <person name="Parales R.E."/>
            <person name="Detter C."/>
            <person name="Pujic P."/>
            <person name="Bruce D."/>
            <person name="Lavire C."/>
            <person name="Challacombe J.F."/>
            <person name="Brettin T.S."/>
            <person name="Berry A.M."/>
        </authorList>
    </citation>
    <scope>NUCLEOTIDE SEQUENCE [LARGE SCALE GENOMIC DNA]</scope>
    <source>
        <strain>ATCC 43068 / DSM 8971 / 11B</strain>
    </source>
</reference>